<accession>P9WFQ7</accession>
<accession>L0T8S0</accession>
<accession>O06228</accession>
<accession>P67083</accession>
<proteinExistence type="evidence at protein level"/>
<comment type="function">
    <text evidence="1">Pyridoxal 5'-phosphate (PLP)-binding protein, which is involved in PLP homeostasis.</text>
</comment>
<comment type="similarity">
    <text evidence="1">Belongs to the pyridoxal phosphate-binding protein YggS/PROSC family.</text>
</comment>
<gene>
    <name type="ordered locus">Rv2148c</name>
    <name type="ORF">MTCY270.20</name>
</gene>
<organism>
    <name type="scientific">Mycobacterium tuberculosis (strain ATCC 25618 / H37Rv)</name>
    <dbReference type="NCBI Taxonomy" id="83332"/>
    <lineage>
        <taxon>Bacteria</taxon>
        <taxon>Bacillati</taxon>
        <taxon>Actinomycetota</taxon>
        <taxon>Actinomycetes</taxon>
        <taxon>Mycobacteriales</taxon>
        <taxon>Mycobacteriaceae</taxon>
        <taxon>Mycobacterium</taxon>
        <taxon>Mycobacterium tuberculosis complex</taxon>
    </lineage>
</organism>
<protein>
    <recommendedName>
        <fullName evidence="1">Pyridoxal phosphate homeostasis protein</fullName>
        <shortName evidence="1">PLP homeostasis protein</shortName>
    </recommendedName>
</protein>
<feature type="chain" id="PRO_0000163203" description="Pyridoxal phosphate homeostasis protein">
    <location>
        <begin position="1"/>
        <end position="258"/>
    </location>
</feature>
<feature type="modified residue" description="N6-(pyridoxal phosphate)lysine" evidence="1">
    <location>
        <position position="47"/>
    </location>
</feature>
<name>PLPHP_MYCTU</name>
<reference key="1">
    <citation type="journal article" date="1998" name="Nature">
        <title>Deciphering the biology of Mycobacterium tuberculosis from the complete genome sequence.</title>
        <authorList>
            <person name="Cole S.T."/>
            <person name="Brosch R."/>
            <person name="Parkhill J."/>
            <person name="Garnier T."/>
            <person name="Churcher C.M."/>
            <person name="Harris D.E."/>
            <person name="Gordon S.V."/>
            <person name="Eiglmeier K."/>
            <person name="Gas S."/>
            <person name="Barry C.E. III"/>
            <person name="Tekaia F."/>
            <person name="Badcock K."/>
            <person name="Basham D."/>
            <person name="Brown D."/>
            <person name="Chillingworth T."/>
            <person name="Connor R."/>
            <person name="Davies R.M."/>
            <person name="Devlin K."/>
            <person name="Feltwell T."/>
            <person name="Gentles S."/>
            <person name="Hamlin N."/>
            <person name="Holroyd S."/>
            <person name="Hornsby T."/>
            <person name="Jagels K."/>
            <person name="Krogh A."/>
            <person name="McLean J."/>
            <person name="Moule S."/>
            <person name="Murphy L.D."/>
            <person name="Oliver S."/>
            <person name="Osborne J."/>
            <person name="Quail M.A."/>
            <person name="Rajandream M.A."/>
            <person name="Rogers J."/>
            <person name="Rutter S."/>
            <person name="Seeger K."/>
            <person name="Skelton S."/>
            <person name="Squares S."/>
            <person name="Squares R."/>
            <person name="Sulston J.E."/>
            <person name="Taylor K."/>
            <person name="Whitehead S."/>
            <person name="Barrell B.G."/>
        </authorList>
    </citation>
    <scope>NUCLEOTIDE SEQUENCE [LARGE SCALE GENOMIC DNA]</scope>
    <source>
        <strain>ATCC 25618 / H37Rv</strain>
    </source>
</reference>
<reference key="2">
    <citation type="journal article" date="2011" name="Mol. Cell. Proteomics">
        <title>Proteogenomic analysis of Mycobacterium tuberculosis by high resolution mass spectrometry.</title>
        <authorList>
            <person name="Kelkar D.S."/>
            <person name="Kumar D."/>
            <person name="Kumar P."/>
            <person name="Balakrishnan L."/>
            <person name="Muthusamy B."/>
            <person name="Yadav A.K."/>
            <person name="Shrivastava P."/>
            <person name="Marimuthu A."/>
            <person name="Anand S."/>
            <person name="Sundaram H."/>
            <person name="Kingsbury R."/>
            <person name="Harsha H.C."/>
            <person name="Nair B."/>
            <person name="Prasad T.S."/>
            <person name="Chauhan D.S."/>
            <person name="Katoch K."/>
            <person name="Katoch V.M."/>
            <person name="Kumar P."/>
            <person name="Chaerkady R."/>
            <person name="Ramachandran S."/>
            <person name="Dash D."/>
            <person name="Pandey A."/>
        </authorList>
    </citation>
    <scope>IDENTIFICATION BY MASS SPECTROMETRY [LARGE SCALE ANALYSIS]</scope>
    <source>
        <strain>ATCC 25618 / H37Rv</strain>
    </source>
</reference>
<dbReference type="EMBL" id="AL123456">
    <property type="protein sequence ID" value="CCP44924.1"/>
    <property type="molecule type" value="Genomic_DNA"/>
</dbReference>
<dbReference type="PIR" id="H70578">
    <property type="entry name" value="H70578"/>
</dbReference>
<dbReference type="RefSeq" id="NP_216664.1">
    <property type="nucleotide sequence ID" value="NC_000962.3"/>
</dbReference>
<dbReference type="RefSeq" id="WP_003411137.1">
    <property type="nucleotide sequence ID" value="NZ_NVQJ01000044.1"/>
</dbReference>
<dbReference type="SMR" id="P9WFQ7"/>
<dbReference type="FunCoup" id="P9WFQ7">
    <property type="interactions" value="432"/>
</dbReference>
<dbReference type="STRING" id="83332.Rv2148c"/>
<dbReference type="PaxDb" id="83332-Rv2148c"/>
<dbReference type="DNASU" id="888127"/>
<dbReference type="GeneID" id="888127"/>
<dbReference type="KEGG" id="mtu:Rv2148c"/>
<dbReference type="KEGG" id="mtv:RVBD_2148c"/>
<dbReference type="PATRIC" id="fig|83332.111.peg.2394"/>
<dbReference type="TubercuList" id="Rv2148c"/>
<dbReference type="eggNOG" id="COG0325">
    <property type="taxonomic scope" value="Bacteria"/>
</dbReference>
<dbReference type="InParanoid" id="P9WFQ7"/>
<dbReference type="OrthoDB" id="9804072at2"/>
<dbReference type="PhylomeDB" id="P9WFQ7"/>
<dbReference type="Proteomes" id="UP000001584">
    <property type="component" value="Chromosome"/>
</dbReference>
<dbReference type="GO" id="GO:0005737">
    <property type="term" value="C:cytoplasm"/>
    <property type="evidence" value="ECO:0000318"/>
    <property type="project" value="GO_Central"/>
</dbReference>
<dbReference type="GO" id="GO:0030170">
    <property type="term" value="F:pyridoxal phosphate binding"/>
    <property type="evidence" value="ECO:0000318"/>
    <property type="project" value="GO_Central"/>
</dbReference>
<dbReference type="Gene3D" id="3.20.20.10">
    <property type="entry name" value="Alanine racemase"/>
    <property type="match status" value="1"/>
</dbReference>
<dbReference type="HAMAP" id="MF_02087">
    <property type="entry name" value="PLP_homeostasis"/>
    <property type="match status" value="1"/>
</dbReference>
<dbReference type="InterPro" id="IPR001608">
    <property type="entry name" value="Ala_racemase_N"/>
</dbReference>
<dbReference type="InterPro" id="IPR029066">
    <property type="entry name" value="PLP-binding_barrel"/>
</dbReference>
<dbReference type="InterPro" id="IPR011078">
    <property type="entry name" value="PyrdxlP_homeostasis"/>
</dbReference>
<dbReference type="NCBIfam" id="TIGR00044">
    <property type="entry name" value="YggS family pyridoxal phosphate-dependent enzyme"/>
    <property type="match status" value="1"/>
</dbReference>
<dbReference type="PANTHER" id="PTHR10146">
    <property type="entry name" value="PROLINE SYNTHETASE CO-TRANSCRIBED BACTERIAL HOMOLOG PROTEIN"/>
    <property type="match status" value="1"/>
</dbReference>
<dbReference type="PANTHER" id="PTHR10146:SF14">
    <property type="entry name" value="PYRIDOXAL PHOSPHATE HOMEOSTASIS PROTEIN"/>
    <property type="match status" value="1"/>
</dbReference>
<dbReference type="Pfam" id="PF01168">
    <property type="entry name" value="Ala_racemase_N"/>
    <property type="match status" value="1"/>
</dbReference>
<dbReference type="PIRSF" id="PIRSF004848">
    <property type="entry name" value="YBL036c_PLPDEIII"/>
    <property type="match status" value="1"/>
</dbReference>
<dbReference type="SUPFAM" id="SSF51419">
    <property type="entry name" value="PLP-binding barrel"/>
    <property type="match status" value="1"/>
</dbReference>
<dbReference type="PROSITE" id="PS01211">
    <property type="entry name" value="UPF0001"/>
    <property type="match status" value="1"/>
</dbReference>
<evidence type="ECO:0000255" key="1">
    <source>
        <dbReference type="HAMAP-Rule" id="MF_02087"/>
    </source>
</evidence>
<sequence length="258" mass="27693">MAADLSAYPDRESELTHALAAMRSRLAAAAEAAGRNVGEIELLPITKFFPATDVAILFRLGCRSVGESREQEASAKMAELNRLLAAAELGHSGGVHWHMVGRIQRNKAGSLARWAHTAHSVDSSRLVTALDRAVVAALAEHRRGERLRVYVQVSLDGDGSRGGVDSTTPGAVDRICAQVQESEGLELVGLMGIPPLDWDPDEAFDRLQSEHNRVRAMFPHAIGLSAGMSNDLEVAVKHGSTCVRVGTALLGPRRLRSP</sequence>
<keyword id="KW-0663">Pyridoxal phosphate</keyword>
<keyword id="KW-1185">Reference proteome</keyword>